<keyword id="KW-0002">3D-structure</keyword>
<keyword id="KW-0067">ATP-binding</keyword>
<keyword id="KW-0104">Cadmium</keyword>
<keyword id="KW-0997">Cell inner membrane</keyword>
<keyword id="KW-1003">Cell membrane</keyword>
<keyword id="KW-0406">Ion transport</keyword>
<keyword id="KW-1027">Lead</keyword>
<keyword id="KW-0460">Magnesium</keyword>
<keyword id="KW-0472">Membrane</keyword>
<keyword id="KW-0479">Metal-binding</keyword>
<keyword id="KW-0547">Nucleotide-binding</keyword>
<keyword id="KW-0597">Phosphoprotein</keyword>
<keyword id="KW-1185">Reference proteome</keyword>
<keyword id="KW-1278">Translocase</keyword>
<keyword id="KW-0812">Transmembrane</keyword>
<keyword id="KW-1133">Transmembrane helix</keyword>
<keyword id="KW-0813">Transport</keyword>
<keyword id="KW-0862">Zinc</keyword>
<keyword id="KW-0864">Zinc transport</keyword>
<accession>Q3YW59</accession>
<comment type="function">
    <text evidence="7">Confers resistance to zinc, cadmium and lead. Couples the hydrolysis of ATP with the export of zinc, cadmium or lead.</text>
</comment>
<comment type="catalytic activity">
    <reaction evidence="1">
        <text>Pb(2+)(in) + ATP + H2O = Pb(2+)(out) + ADP + phosphate + H(+)</text>
        <dbReference type="Rhea" id="RHEA:52580"/>
        <dbReference type="ChEBI" id="CHEBI:15377"/>
        <dbReference type="ChEBI" id="CHEBI:15378"/>
        <dbReference type="ChEBI" id="CHEBI:30616"/>
        <dbReference type="ChEBI" id="CHEBI:43474"/>
        <dbReference type="ChEBI" id="CHEBI:49807"/>
        <dbReference type="ChEBI" id="CHEBI:456216"/>
    </reaction>
</comment>
<comment type="catalytic activity">
    <reaction evidence="4">
        <text>Zn(2+)(in) + ATP + H2O = Zn(2+)(out) + ADP + phosphate + H(+)</text>
        <dbReference type="Rhea" id="RHEA:20621"/>
        <dbReference type="ChEBI" id="CHEBI:15377"/>
        <dbReference type="ChEBI" id="CHEBI:15378"/>
        <dbReference type="ChEBI" id="CHEBI:29105"/>
        <dbReference type="ChEBI" id="CHEBI:30616"/>
        <dbReference type="ChEBI" id="CHEBI:43474"/>
        <dbReference type="ChEBI" id="CHEBI:456216"/>
        <dbReference type="EC" id="7.2.2.12"/>
    </reaction>
</comment>
<comment type="catalytic activity">
    <reaction evidence="1">
        <text>Cd(2+)(in) + ATP + H2O = Cd(2+)(out) + ADP + phosphate + H(+)</text>
        <dbReference type="Rhea" id="RHEA:12132"/>
        <dbReference type="ChEBI" id="CHEBI:15377"/>
        <dbReference type="ChEBI" id="CHEBI:15378"/>
        <dbReference type="ChEBI" id="CHEBI:30616"/>
        <dbReference type="ChEBI" id="CHEBI:43474"/>
        <dbReference type="ChEBI" id="CHEBI:48775"/>
        <dbReference type="ChEBI" id="CHEBI:456216"/>
        <dbReference type="EC" id="7.2.2.21"/>
    </reaction>
</comment>
<comment type="subcellular location">
    <subcellularLocation>
        <location evidence="1">Cell inner membrane</location>
        <topology evidence="2">Multi-pass membrane protein</topology>
    </subcellularLocation>
</comment>
<comment type="domain">
    <text evidence="1">Has two high-affinity metal-binding sites, one in the N-terminal region and another in the transmembrane region. Both sites are able to access and bind metal ion independently of each other. The N-terminal metal-binding site is not strictly necessary for activity and metal selectivity, but is needed for maximal activity and may be involved in regulation. The metal-binding site in the transmembrane region is essential for activity of the pump.</text>
</comment>
<comment type="similarity">
    <text evidence="6">Belongs to the cation transport ATPase (P-type) (TC 3.A.3) family. Type IB subfamily.</text>
</comment>
<organism>
    <name type="scientific">Shigella sonnei (strain Ss046)</name>
    <dbReference type="NCBI Taxonomy" id="300269"/>
    <lineage>
        <taxon>Bacteria</taxon>
        <taxon>Pseudomonadati</taxon>
        <taxon>Pseudomonadota</taxon>
        <taxon>Gammaproteobacteria</taxon>
        <taxon>Enterobacterales</taxon>
        <taxon>Enterobacteriaceae</taxon>
        <taxon>Shigella</taxon>
    </lineage>
</organism>
<protein>
    <recommendedName>
        <fullName evidence="6">Zinc/cadmium/lead-transporting P-type ATPase</fullName>
        <ecNumber evidence="1">7.2.2.-</ecNumber>
        <ecNumber evidence="4">7.2.2.12</ecNumber>
        <ecNumber evidence="1">7.2.2.21</ecNumber>
    </recommendedName>
    <alternativeName>
        <fullName evidence="6">Zn(2+)/Cd(2+)/Pb(2+) export ATPase</fullName>
    </alternativeName>
</protein>
<reference key="1">
    <citation type="journal article" date="2005" name="Nucleic Acids Res.">
        <title>Genome dynamics and diversity of Shigella species, the etiologic agents of bacillary dysentery.</title>
        <authorList>
            <person name="Yang F."/>
            <person name="Yang J."/>
            <person name="Zhang X."/>
            <person name="Chen L."/>
            <person name="Jiang Y."/>
            <person name="Yan Y."/>
            <person name="Tang X."/>
            <person name="Wang J."/>
            <person name="Xiong Z."/>
            <person name="Dong J."/>
            <person name="Xue Y."/>
            <person name="Zhu Y."/>
            <person name="Xu X."/>
            <person name="Sun L."/>
            <person name="Chen S."/>
            <person name="Nie H."/>
            <person name="Peng J."/>
            <person name="Xu J."/>
            <person name="Wang Y."/>
            <person name="Yuan Z."/>
            <person name="Wen Y."/>
            <person name="Yao Z."/>
            <person name="Shen Y."/>
            <person name="Qiang B."/>
            <person name="Hou Y."/>
            <person name="Yu J."/>
            <person name="Jin Q."/>
        </authorList>
    </citation>
    <scope>NUCLEOTIDE SEQUENCE [LARGE SCALE GENOMIC DNA]</scope>
    <source>
        <strain>Ss046</strain>
    </source>
</reference>
<reference evidence="9 10" key="2">
    <citation type="journal article" date="2014" name="Nature">
        <title>Structure and mechanism of Zn2+-transporting P-type ATPases.</title>
        <authorList>
            <person name="Wang K."/>
            <person name="Sitsel O."/>
            <person name="Meloni G."/>
            <person name="Autzen H.E."/>
            <person name="Andersson M."/>
            <person name="Klymchuk T."/>
            <person name="Nielsen A.M."/>
            <person name="Rees D.C."/>
            <person name="Nissen P."/>
            <person name="Gourdon P."/>
        </authorList>
    </citation>
    <scope>X-RAY CRYSTALLOGRAPHY (2.71 ANGSTROMS) IN COMPLEX WITH MAGNESIUM AND PHOSPHATE ANALOG</scope>
    <scope>FUNCTION</scope>
    <scope>CATALYTIC ACTIVITY</scope>
    <scope>ACTIVE SITE</scope>
    <scope>METAL-BINDING SITES</scope>
    <scope>MUTAGENESIS OF MET-187; GLU-202; PHE-210; GLU-214; TYR-354; ASP-436; LYS-693 AND ASP-714</scope>
</reference>
<gene>
    <name evidence="5" type="primary">zntA</name>
    <name evidence="8" type="ordered locus">SSON_3707</name>
</gene>
<evidence type="ECO:0000250" key="1">
    <source>
        <dbReference type="UniProtKB" id="P37617"/>
    </source>
</evidence>
<evidence type="ECO:0000255" key="2"/>
<evidence type="ECO:0000255" key="3">
    <source>
        <dbReference type="PROSITE-ProRule" id="PRU00280"/>
    </source>
</evidence>
<evidence type="ECO:0000269" key="4">
    <source>
    </source>
</evidence>
<evidence type="ECO:0000303" key="5">
    <source>
    </source>
</evidence>
<evidence type="ECO:0000305" key="6"/>
<evidence type="ECO:0000305" key="7">
    <source>
    </source>
</evidence>
<evidence type="ECO:0000312" key="8">
    <source>
        <dbReference type="EMBL" id="AAZ90253.1"/>
    </source>
</evidence>
<evidence type="ECO:0007744" key="9">
    <source>
        <dbReference type="PDB" id="4UMV"/>
    </source>
</evidence>
<evidence type="ECO:0007744" key="10">
    <source>
        <dbReference type="PDB" id="4UMW"/>
    </source>
</evidence>
<evidence type="ECO:0007829" key="11">
    <source>
        <dbReference type="PDB" id="4UMV"/>
    </source>
</evidence>
<evidence type="ECO:0007829" key="12">
    <source>
        <dbReference type="PDB" id="4UMW"/>
    </source>
</evidence>
<proteinExistence type="evidence at protein level"/>
<sequence>MSTPDNHGKKAPQFAAFKPLTTVQNANDCCCDGACSSSPTLSENVSGTRYSWKVSGMDCAACARKVENAVRQLAGVNQVQVLFATEKLVVDADNDIRAQVESAVQKAGYSLRDEQAADEPQASRLKENLPLITLIVMMAISWGLEQFNHPFGQLAFIATTLVGLYPIARQALRLIKSGSYFAIETLMSVAAIGALFIGATAEAAMVLLLFLIGERLEGWAASRARQGVSALMALKPETATRLRNGEREEVAINSLRPGDVIEVAAGGRLPADGKLLSPFASFDESALTGESIPVERATGDKVPAGATSVDRLVTLEVLSEPGASAIDRILKLIEEAEERRAPIERFIDRFSRIYTPAIMAVALLVTLVPPLLFAASWQEWIYKGLTLLLIGCPCALVISTPAAITSGLAAAARRGALIKGGAALEQLGRVTQVAFDKTGTLTVGKPRVTAIHPATGISESELLTLAAAVEQGATHPLAQAIVREAQVAELAIPTAESQRALVGSGIEAQVNGERVLICAAGKHPADAFAGLINELESAGQTVVLVVRNDDVLGIIALQDTLRADAATAISELNALGVKGVILTGDNPRAAAAIAGELGLEFKAGLLPEDKVKAVTKLNQHAPLAMVGDGINDAPAMKAAAIGIAMGSGTDVALETADAALTHNHLRGLVQMIELARATHANIRQNITIALGLKGIFLVTTLLGMTGLWLAVLADTGATVLVTANALRLLRRR</sequence>
<dbReference type="EC" id="7.2.2.-" evidence="1"/>
<dbReference type="EC" id="7.2.2.12" evidence="4"/>
<dbReference type="EC" id="7.2.2.21" evidence="1"/>
<dbReference type="EMBL" id="CP000038">
    <property type="protein sequence ID" value="AAZ90253.1"/>
    <property type="molecule type" value="Genomic_DNA"/>
</dbReference>
<dbReference type="RefSeq" id="WP_000106527.1">
    <property type="nucleotide sequence ID" value="NC_007384.1"/>
</dbReference>
<dbReference type="PDB" id="4UMV">
    <property type="method" value="X-ray"/>
    <property type="resolution" value="3.20 A"/>
    <property type="chains" value="A=1-732"/>
</dbReference>
<dbReference type="PDB" id="4UMW">
    <property type="method" value="X-ray"/>
    <property type="resolution" value="2.71 A"/>
    <property type="chains" value="A=1-732"/>
</dbReference>
<dbReference type="PDBsum" id="4UMV"/>
<dbReference type="PDBsum" id="4UMW"/>
<dbReference type="SMR" id="Q3YW59"/>
<dbReference type="GeneID" id="93778522"/>
<dbReference type="KEGG" id="ssn:SSON_3707"/>
<dbReference type="HOGENOM" id="CLU_001771_6_4_6"/>
<dbReference type="BRENDA" id="7.2.2.12">
    <property type="organism ID" value="5713"/>
</dbReference>
<dbReference type="EvolutionaryTrace" id="Q3YW59"/>
<dbReference type="Proteomes" id="UP000002529">
    <property type="component" value="Chromosome"/>
</dbReference>
<dbReference type="GO" id="GO:0005886">
    <property type="term" value="C:plasma membrane"/>
    <property type="evidence" value="ECO:0007669"/>
    <property type="project" value="UniProtKB-SubCell"/>
</dbReference>
<dbReference type="GO" id="GO:0005524">
    <property type="term" value="F:ATP binding"/>
    <property type="evidence" value="ECO:0007669"/>
    <property type="project" value="UniProtKB-KW"/>
</dbReference>
<dbReference type="GO" id="GO:0016887">
    <property type="term" value="F:ATP hydrolysis activity"/>
    <property type="evidence" value="ECO:0007669"/>
    <property type="project" value="InterPro"/>
</dbReference>
<dbReference type="GO" id="GO:0046872">
    <property type="term" value="F:metal ion binding"/>
    <property type="evidence" value="ECO:0007669"/>
    <property type="project" value="UniProtKB-KW"/>
</dbReference>
<dbReference type="GO" id="GO:0008551">
    <property type="term" value="F:P-type cadmium transporter activity"/>
    <property type="evidence" value="ECO:0007669"/>
    <property type="project" value="UniProtKB-EC"/>
</dbReference>
<dbReference type="GO" id="GO:0016463">
    <property type="term" value="F:P-type zinc transporter activity"/>
    <property type="evidence" value="ECO:0007669"/>
    <property type="project" value="UniProtKB-EC"/>
</dbReference>
<dbReference type="CDD" id="cd00371">
    <property type="entry name" value="HMA"/>
    <property type="match status" value="1"/>
</dbReference>
<dbReference type="CDD" id="cd07546">
    <property type="entry name" value="P-type_ATPase_Pb_Zn_Cd2-like"/>
    <property type="match status" value="1"/>
</dbReference>
<dbReference type="FunFam" id="2.70.150.10:FF:000039">
    <property type="entry name" value="Cadmium-translocating P-type ATPase"/>
    <property type="match status" value="1"/>
</dbReference>
<dbReference type="FunFam" id="3.30.70.100:FF:000029">
    <property type="entry name" value="Zinc/cadmium/lead-transporting P-type ATPase"/>
    <property type="match status" value="1"/>
</dbReference>
<dbReference type="FunFam" id="3.40.1110.10:FF:000034">
    <property type="entry name" value="Zinc/cadmium/lead-transporting P-type ATPase"/>
    <property type="match status" value="1"/>
</dbReference>
<dbReference type="Gene3D" id="3.30.70.100">
    <property type="match status" value="1"/>
</dbReference>
<dbReference type="Gene3D" id="3.40.1110.10">
    <property type="entry name" value="Calcium-transporting ATPase, cytoplasmic domain N"/>
    <property type="match status" value="1"/>
</dbReference>
<dbReference type="Gene3D" id="2.70.150.10">
    <property type="entry name" value="Calcium-transporting ATPase, cytoplasmic transduction domain A"/>
    <property type="match status" value="1"/>
</dbReference>
<dbReference type="Gene3D" id="1.20.1110.10">
    <property type="entry name" value="Calcium-transporting ATPase, transmembrane domain"/>
    <property type="match status" value="1"/>
</dbReference>
<dbReference type="Gene3D" id="3.40.50.1000">
    <property type="entry name" value="HAD superfamily/HAD-like"/>
    <property type="match status" value="1"/>
</dbReference>
<dbReference type="InterPro" id="IPR023299">
    <property type="entry name" value="ATPase_P-typ_cyto_dom_N"/>
</dbReference>
<dbReference type="InterPro" id="IPR018303">
    <property type="entry name" value="ATPase_P-typ_P_site"/>
</dbReference>
<dbReference type="InterPro" id="IPR023298">
    <property type="entry name" value="ATPase_P-typ_TM_dom_sf"/>
</dbReference>
<dbReference type="InterPro" id="IPR008250">
    <property type="entry name" value="ATPase_P-typ_transduc_dom_A_sf"/>
</dbReference>
<dbReference type="InterPro" id="IPR051014">
    <property type="entry name" value="Cation_Transport_ATPase_IB"/>
</dbReference>
<dbReference type="InterPro" id="IPR036412">
    <property type="entry name" value="HAD-like_sf"/>
</dbReference>
<dbReference type="InterPro" id="IPR023214">
    <property type="entry name" value="HAD_sf"/>
</dbReference>
<dbReference type="InterPro" id="IPR017969">
    <property type="entry name" value="Heavy-metal-associated_CS"/>
</dbReference>
<dbReference type="InterPro" id="IPR006121">
    <property type="entry name" value="HMA_dom"/>
</dbReference>
<dbReference type="InterPro" id="IPR036163">
    <property type="entry name" value="HMA_dom_sf"/>
</dbReference>
<dbReference type="InterPro" id="IPR027256">
    <property type="entry name" value="P-typ_ATPase_IB"/>
</dbReference>
<dbReference type="InterPro" id="IPR001757">
    <property type="entry name" value="P_typ_ATPase"/>
</dbReference>
<dbReference type="InterPro" id="IPR044492">
    <property type="entry name" value="P_typ_ATPase_HD_dom"/>
</dbReference>
<dbReference type="NCBIfam" id="TIGR01512">
    <property type="entry name" value="ATPase-IB2_Cd"/>
    <property type="match status" value="1"/>
</dbReference>
<dbReference type="NCBIfam" id="TIGR01525">
    <property type="entry name" value="ATPase-IB_hvy"/>
    <property type="match status" value="1"/>
</dbReference>
<dbReference type="NCBIfam" id="TIGR01494">
    <property type="entry name" value="ATPase_P-type"/>
    <property type="match status" value="1"/>
</dbReference>
<dbReference type="NCBIfam" id="NF033775">
    <property type="entry name" value="P_type_ZntA"/>
    <property type="match status" value="1"/>
</dbReference>
<dbReference type="NCBIfam" id="NF008262">
    <property type="entry name" value="PRK11033.1"/>
    <property type="match status" value="1"/>
</dbReference>
<dbReference type="PANTHER" id="PTHR48085">
    <property type="entry name" value="CADMIUM/ZINC-TRANSPORTING ATPASE HMA2-RELATED"/>
    <property type="match status" value="1"/>
</dbReference>
<dbReference type="PANTHER" id="PTHR48085:SF5">
    <property type="entry name" value="CADMIUM_ZINC-TRANSPORTING ATPASE HMA4-RELATED"/>
    <property type="match status" value="1"/>
</dbReference>
<dbReference type="Pfam" id="PF00122">
    <property type="entry name" value="E1-E2_ATPase"/>
    <property type="match status" value="1"/>
</dbReference>
<dbReference type="Pfam" id="PF00403">
    <property type="entry name" value="HMA"/>
    <property type="match status" value="1"/>
</dbReference>
<dbReference type="Pfam" id="PF00702">
    <property type="entry name" value="Hydrolase"/>
    <property type="match status" value="1"/>
</dbReference>
<dbReference type="PRINTS" id="PR00119">
    <property type="entry name" value="CATATPASE"/>
</dbReference>
<dbReference type="PRINTS" id="PR00120">
    <property type="entry name" value="HATPASE"/>
</dbReference>
<dbReference type="SFLD" id="SFLDG00002">
    <property type="entry name" value="C1.7:_P-type_atpase_like"/>
    <property type="match status" value="1"/>
</dbReference>
<dbReference type="SFLD" id="SFLDF00027">
    <property type="entry name" value="p-type_atpase"/>
    <property type="match status" value="1"/>
</dbReference>
<dbReference type="SUPFAM" id="SSF81653">
    <property type="entry name" value="Calcium ATPase, transduction domain A"/>
    <property type="match status" value="1"/>
</dbReference>
<dbReference type="SUPFAM" id="SSF81665">
    <property type="entry name" value="Calcium ATPase, transmembrane domain M"/>
    <property type="match status" value="1"/>
</dbReference>
<dbReference type="SUPFAM" id="SSF56784">
    <property type="entry name" value="HAD-like"/>
    <property type="match status" value="1"/>
</dbReference>
<dbReference type="SUPFAM" id="SSF55008">
    <property type="entry name" value="HMA, heavy metal-associated domain"/>
    <property type="match status" value="1"/>
</dbReference>
<dbReference type="PROSITE" id="PS00154">
    <property type="entry name" value="ATPASE_E1_E2"/>
    <property type="match status" value="1"/>
</dbReference>
<dbReference type="PROSITE" id="PS01047">
    <property type="entry name" value="HMA_1"/>
    <property type="match status" value="1"/>
</dbReference>
<dbReference type="PROSITE" id="PS50846">
    <property type="entry name" value="HMA_2"/>
    <property type="match status" value="1"/>
</dbReference>
<feature type="chain" id="PRO_0000439356" description="Zinc/cadmium/lead-transporting P-type ATPase">
    <location>
        <begin position="1"/>
        <end position="732"/>
    </location>
</feature>
<feature type="topological domain" description="Cytoplasmic" evidence="6">
    <location>
        <begin position="1"/>
        <end position="124"/>
    </location>
</feature>
<feature type="transmembrane region" description="Helical" evidence="2">
    <location>
        <begin position="125"/>
        <end position="145"/>
    </location>
</feature>
<feature type="topological domain" description="Periplasmic" evidence="6">
    <location>
        <position position="146"/>
    </location>
</feature>
<feature type="transmembrane region" description="Helical" evidence="2">
    <location>
        <begin position="147"/>
        <end position="167"/>
    </location>
</feature>
<feature type="topological domain" description="Cytoplasmic" evidence="6">
    <location>
        <begin position="168"/>
        <end position="179"/>
    </location>
</feature>
<feature type="transmembrane region" description="Helical" evidence="2">
    <location>
        <begin position="180"/>
        <end position="197"/>
    </location>
</feature>
<feature type="topological domain" description="Periplasmic" evidence="6">
    <location>
        <begin position="198"/>
        <end position="202"/>
    </location>
</feature>
<feature type="transmembrane region" description="Helical" evidence="2">
    <location>
        <begin position="203"/>
        <end position="222"/>
    </location>
</feature>
<feature type="topological domain" description="Cytoplasmic" evidence="6">
    <location>
        <begin position="223"/>
        <end position="356"/>
    </location>
</feature>
<feature type="transmembrane region" description="Helical" evidence="2">
    <location>
        <begin position="357"/>
        <end position="377"/>
    </location>
</feature>
<feature type="topological domain" description="Periplasmic" evidence="6">
    <location>
        <begin position="378"/>
        <end position="383"/>
    </location>
</feature>
<feature type="transmembrane region" description="Helical" evidence="2">
    <location>
        <begin position="384"/>
        <end position="404"/>
    </location>
</feature>
<feature type="topological domain" description="Cytoplasmic" evidence="6">
    <location>
        <begin position="405"/>
        <end position="685"/>
    </location>
</feature>
<feature type="transmembrane region" description="Helical" evidence="2">
    <location>
        <begin position="686"/>
        <end position="702"/>
    </location>
</feature>
<feature type="topological domain" description="Periplasmic" evidence="6">
    <location>
        <begin position="703"/>
        <end position="707"/>
    </location>
</feature>
<feature type="transmembrane region" description="Helical" evidence="2">
    <location>
        <begin position="708"/>
        <end position="729"/>
    </location>
</feature>
<feature type="topological domain" description="Cytoplasmic" evidence="1">
    <location>
        <begin position="730"/>
        <end position="732"/>
    </location>
</feature>
<feature type="domain" description="HMA" evidence="3">
    <location>
        <begin position="48"/>
        <end position="112"/>
    </location>
</feature>
<feature type="active site" description="4-aspartylphosphate intermediate" evidence="7">
    <location>
        <position position="436"/>
    </location>
</feature>
<feature type="binding site" evidence="1">
    <location>
        <position position="58"/>
    </location>
    <ligand>
        <name>Zn(2+)</name>
        <dbReference type="ChEBI" id="CHEBI:29105"/>
        <label>1</label>
    </ligand>
</feature>
<feature type="binding site" evidence="3">
    <location>
        <position position="59"/>
    </location>
    <ligand>
        <name>Zn(2+)</name>
        <dbReference type="ChEBI" id="CHEBI:29105"/>
        <label>1</label>
    </ligand>
</feature>
<feature type="binding site" evidence="3">
    <location>
        <position position="62"/>
    </location>
    <ligand>
        <name>Zn(2+)</name>
        <dbReference type="ChEBI" id="CHEBI:29105"/>
        <label>1</label>
    </ligand>
</feature>
<feature type="binding site" evidence="1">
    <location>
        <position position="392"/>
    </location>
    <ligand>
        <name>Zn(2+)</name>
        <dbReference type="ChEBI" id="CHEBI:29105"/>
        <label>2</label>
    </ligand>
</feature>
<feature type="binding site" evidence="1">
    <location>
        <position position="394"/>
    </location>
    <ligand>
        <name>Zn(2+)</name>
        <dbReference type="ChEBI" id="CHEBI:29105"/>
        <label>2</label>
    </ligand>
</feature>
<feature type="binding site" evidence="4">
    <location>
        <position position="436"/>
    </location>
    <ligand>
        <name>Mg(2+)</name>
        <dbReference type="ChEBI" id="CHEBI:18420"/>
    </ligand>
</feature>
<feature type="binding site" evidence="4">
    <location>
        <position position="438"/>
    </location>
    <ligand>
        <name>Mg(2+)</name>
        <dbReference type="ChEBI" id="CHEBI:18420"/>
    </ligand>
</feature>
<feature type="binding site" evidence="4">
    <location>
        <position position="628"/>
    </location>
    <ligand>
        <name>Mg(2+)</name>
        <dbReference type="ChEBI" id="CHEBI:18420"/>
    </ligand>
</feature>
<feature type="binding site" evidence="1 7">
    <location>
        <position position="714"/>
    </location>
    <ligand>
        <name>Zn(2+)</name>
        <dbReference type="ChEBI" id="CHEBI:29105"/>
        <label>2</label>
    </ligand>
</feature>
<feature type="site" description="Important for metal transport" evidence="7">
    <location>
        <position position="693"/>
    </location>
</feature>
<feature type="mutagenesis site" description="No change in ATPase activity and in zinc binding." evidence="4">
    <original>M</original>
    <variation>A</variation>
    <location>
        <position position="187"/>
    </location>
</feature>
<feature type="mutagenesis site" description="Lack of ATPase activity and decrease in zinc binding." evidence="4">
    <original>E</original>
    <variation>A</variation>
    <location>
        <position position="202"/>
    </location>
</feature>
<feature type="mutagenesis site" description="Lack of ATPase activity." evidence="4">
    <original>E</original>
    <variation>D</variation>
    <location>
        <position position="202"/>
    </location>
</feature>
<feature type="mutagenesis site" description="Strong decrease in ATPase activity." evidence="4">
    <original>E</original>
    <variation>Q</variation>
    <location>
        <position position="202"/>
    </location>
</feature>
<feature type="mutagenesis site" description="Decrease in ATPase activity and slight decrease in zinc binding." evidence="4">
    <original>F</original>
    <variation>A</variation>
    <location>
        <position position="210"/>
    </location>
</feature>
<feature type="mutagenesis site" description="Decrease in ATPase activity." evidence="4">
    <original>E</original>
    <variation>A</variation>
    <variation>Q</variation>
    <location>
        <position position="214"/>
    </location>
</feature>
<feature type="mutagenesis site" description="Decrease in ATPase activity." evidence="4">
    <original>Y</original>
    <variation>A</variation>
    <variation>F</variation>
    <location>
        <position position="354"/>
    </location>
</feature>
<feature type="mutagenesis site" description="Lack of ATPase activity." evidence="4">
    <original>D</original>
    <variation>N</variation>
    <location>
        <position position="436"/>
    </location>
</feature>
<feature type="mutagenesis site" description="Lack of ATPase activity but does not affect zinc binding." evidence="4">
    <original>K</original>
    <variation>A</variation>
    <location>
        <position position="693"/>
    </location>
</feature>
<feature type="mutagenesis site" description="Lack of ATPase activity." evidence="4">
    <original>K</original>
    <variation>R</variation>
    <location>
        <position position="693"/>
    </location>
</feature>
<feature type="mutagenesis site" description="Strong decrease in ATPase activity." evidence="4">
    <original>D</original>
    <variation>E</variation>
    <location>
        <position position="714"/>
    </location>
</feature>
<feature type="mutagenesis site" description="Lack of ATPase activity and strong decrease in zinc binding." evidence="4">
    <original>D</original>
    <variation>N</variation>
    <location>
        <position position="714"/>
    </location>
</feature>
<feature type="helix" evidence="12">
    <location>
        <begin position="129"/>
        <end position="144"/>
    </location>
</feature>
<feature type="strand" evidence="11">
    <location>
        <begin position="146"/>
        <end position="148"/>
    </location>
</feature>
<feature type="helix" evidence="12">
    <location>
        <begin position="149"/>
        <end position="176"/>
    </location>
</feature>
<feature type="helix" evidence="12">
    <location>
        <begin position="183"/>
        <end position="196"/>
    </location>
</feature>
<feature type="helix" evidence="12">
    <location>
        <begin position="200"/>
        <end position="219"/>
    </location>
</feature>
<feature type="helix" evidence="12">
    <location>
        <begin position="229"/>
        <end position="232"/>
    </location>
</feature>
<feature type="strand" evidence="12">
    <location>
        <begin position="237"/>
        <end position="243"/>
    </location>
</feature>
<feature type="strand" evidence="12">
    <location>
        <begin position="246"/>
        <end position="251"/>
    </location>
</feature>
<feature type="turn" evidence="12">
    <location>
        <begin position="252"/>
        <end position="254"/>
    </location>
</feature>
<feature type="strand" evidence="12">
    <location>
        <begin position="260"/>
        <end position="263"/>
    </location>
</feature>
<feature type="strand" evidence="12">
    <location>
        <begin position="273"/>
        <end position="275"/>
    </location>
</feature>
<feature type="strand" evidence="12">
    <location>
        <begin position="277"/>
        <end position="283"/>
    </location>
</feature>
<feature type="helix" evidence="12">
    <location>
        <begin position="285"/>
        <end position="288"/>
    </location>
</feature>
<feature type="strand" evidence="12">
    <location>
        <begin position="294"/>
        <end position="297"/>
    </location>
</feature>
<feature type="strand" evidence="12">
    <location>
        <begin position="313"/>
        <end position="317"/>
    </location>
</feature>
<feature type="helix" evidence="11">
    <location>
        <begin position="321"/>
        <end position="323"/>
    </location>
</feature>
<feature type="helix" evidence="12">
    <location>
        <begin position="325"/>
        <end position="338"/>
    </location>
</feature>
<feature type="helix" evidence="12">
    <location>
        <begin position="346"/>
        <end position="372"/>
    </location>
</feature>
<feature type="helix" evidence="12">
    <location>
        <begin position="377"/>
        <end position="391"/>
    </location>
</feature>
<feature type="helix" evidence="12">
    <location>
        <begin position="396"/>
        <end position="413"/>
    </location>
</feature>
<feature type="strand" evidence="11">
    <location>
        <begin position="416"/>
        <end position="418"/>
    </location>
</feature>
<feature type="helix" evidence="12">
    <location>
        <begin position="421"/>
        <end position="428"/>
    </location>
</feature>
<feature type="strand" evidence="12">
    <location>
        <begin position="432"/>
        <end position="435"/>
    </location>
</feature>
<feature type="turn" evidence="12">
    <location>
        <begin position="439"/>
        <end position="441"/>
    </location>
</feature>
<feature type="strand" evidence="12">
    <location>
        <begin position="442"/>
        <end position="453"/>
    </location>
</feature>
<feature type="helix" evidence="12">
    <location>
        <begin position="459"/>
        <end position="470"/>
    </location>
</feature>
<feature type="helix" evidence="12">
    <location>
        <begin position="476"/>
        <end position="487"/>
    </location>
</feature>
<feature type="strand" evidence="12">
    <location>
        <begin position="496"/>
        <end position="501"/>
    </location>
</feature>
<feature type="turn" evidence="12">
    <location>
        <begin position="502"/>
        <end position="504"/>
    </location>
</feature>
<feature type="strand" evidence="12">
    <location>
        <begin position="505"/>
        <end position="510"/>
    </location>
</feature>
<feature type="strand" evidence="12">
    <location>
        <begin position="513"/>
        <end position="519"/>
    </location>
</feature>
<feature type="strand" evidence="11">
    <location>
        <begin position="520"/>
        <end position="523"/>
    </location>
</feature>
<feature type="helix" evidence="11">
    <location>
        <begin position="526"/>
        <end position="528"/>
    </location>
</feature>
<feature type="helix" evidence="12">
    <location>
        <begin position="529"/>
        <end position="537"/>
    </location>
</feature>
<feature type="strand" evidence="12">
    <location>
        <begin position="541"/>
        <end position="547"/>
    </location>
</feature>
<feature type="strand" evidence="12">
    <location>
        <begin position="550"/>
        <end position="561"/>
    </location>
</feature>
<feature type="helix" evidence="12">
    <location>
        <begin position="565"/>
        <end position="574"/>
    </location>
</feature>
<feature type="strand" evidence="12">
    <location>
        <begin position="578"/>
        <end position="582"/>
    </location>
</feature>
<feature type="helix" evidence="12">
    <location>
        <begin position="587"/>
        <end position="597"/>
    </location>
</feature>
<feature type="strand" evidence="12">
    <location>
        <begin position="600"/>
        <end position="602"/>
    </location>
</feature>
<feature type="helix" evidence="12">
    <location>
        <begin position="607"/>
        <end position="620"/>
    </location>
</feature>
<feature type="strand" evidence="12">
    <location>
        <begin position="623"/>
        <end position="627"/>
    </location>
</feature>
<feature type="helix" evidence="12">
    <location>
        <begin position="630"/>
        <end position="632"/>
    </location>
</feature>
<feature type="helix" evidence="12">
    <location>
        <begin position="633"/>
        <end position="638"/>
    </location>
</feature>
<feature type="strand" evidence="12">
    <location>
        <begin position="639"/>
        <end position="645"/>
    </location>
</feature>
<feature type="helix" evidence="12">
    <location>
        <begin position="650"/>
        <end position="655"/>
    </location>
</feature>
<feature type="strand" evidence="12">
    <location>
        <begin position="657"/>
        <end position="660"/>
    </location>
</feature>
<feature type="helix" evidence="12">
    <location>
        <begin position="666"/>
        <end position="701"/>
    </location>
</feature>
<feature type="helix" evidence="12">
    <location>
        <begin position="707"/>
        <end position="725"/>
    </location>
</feature>
<feature type="helix" evidence="12">
    <location>
        <begin position="726"/>
        <end position="729"/>
    </location>
</feature>
<name>ZNTA_SHISS</name>